<sequence length="72" mass="7709">MQSNFIFATLLVLLSLLTFTYASGSSSMTSSSMPMFGGAIVAAFAFAIFSRLAQNFAPRAIFSLLPYHSVSC</sequence>
<reference key="1">
    <citation type="journal article" date="2005" name="Nature">
        <title>The genome of the social amoeba Dictyostelium discoideum.</title>
        <authorList>
            <person name="Eichinger L."/>
            <person name="Pachebat J.A."/>
            <person name="Gloeckner G."/>
            <person name="Rajandream M.A."/>
            <person name="Sucgang R."/>
            <person name="Berriman M."/>
            <person name="Song J."/>
            <person name="Olsen R."/>
            <person name="Szafranski K."/>
            <person name="Xu Q."/>
            <person name="Tunggal B."/>
            <person name="Kummerfeld S."/>
            <person name="Madera M."/>
            <person name="Konfortov B.A."/>
            <person name="Rivero F."/>
            <person name="Bankier A.T."/>
            <person name="Lehmann R."/>
            <person name="Hamlin N."/>
            <person name="Davies R."/>
            <person name="Gaudet P."/>
            <person name="Fey P."/>
            <person name="Pilcher K."/>
            <person name="Chen G."/>
            <person name="Saunders D."/>
            <person name="Sodergren E.J."/>
            <person name="Davis P."/>
            <person name="Kerhornou A."/>
            <person name="Nie X."/>
            <person name="Hall N."/>
            <person name="Anjard C."/>
            <person name="Hemphill L."/>
            <person name="Bason N."/>
            <person name="Farbrother P."/>
            <person name="Desany B."/>
            <person name="Just E."/>
            <person name="Morio T."/>
            <person name="Rost R."/>
            <person name="Churcher C.M."/>
            <person name="Cooper J."/>
            <person name="Haydock S."/>
            <person name="van Driessche N."/>
            <person name="Cronin A."/>
            <person name="Goodhead I."/>
            <person name="Muzny D.M."/>
            <person name="Mourier T."/>
            <person name="Pain A."/>
            <person name="Lu M."/>
            <person name="Harper D."/>
            <person name="Lindsay R."/>
            <person name="Hauser H."/>
            <person name="James K.D."/>
            <person name="Quiles M."/>
            <person name="Madan Babu M."/>
            <person name="Saito T."/>
            <person name="Buchrieser C."/>
            <person name="Wardroper A."/>
            <person name="Felder M."/>
            <person name="Thangavelu M."/>
            <person name="Johnson D."/>
            <person name="Knights A."/>
            <person name="Loulseged H."/>
            <person name="Mungall K.L."/>
            <person name="Oliver K."/>
            <person name="Price C."/>
            <person name="Quail M.A."/>
            <person name="Urushihara H."/>
            <person name="Hernandez J."/>
            <person name="Rabbinowitsch E."/>
            <person name="Steffen D."/>
            <person name="Sanders M."/>
            <person name="Ma J."/>
            <person name="Kohara Y."/>
            <person name="Sharp S."/>
            <person name="Simmonds M.N."/>
            <person name="Spiegler S."/>
            <person name="Tivey A."/>
            <person name="Sugano S."/>
            <person name="White B."/>
            <person name="Walker D."/>
            <person name="Woodward J.R."/>
            <person name="Winckler T."/>
            <person name="Tanaka Y."/>
            <person name="Shaulsky G."/>
            <person name="Schleicher M."/>
            <person name="Weinstock G.M."/>
            <person name="Rosenthal A."/>
            <person name="Cox E.C."/>
            <person name="Chisholm R.L."/>
            <person name="Gibbs R.A."/>
            <person name="Loomis W.F."/>
            <person name="Platzer M."/>
            <person name="Kay R.R."/>
            <person name="Williams J.G."/>
            <person name="Dear P.H."/>
            <person name="Noegel A.A."/>
            <person name="Barrell B.G."/>
            <person name="Kuspa A."/>
        </authorList>
    </citation>
    <scope>NUCLEOTIDE SEQUENCE [LARGE SCALE GENOMIC DNA]</scope>
    <source>
        <strain>AX4</strain>
    </source>
</reference>
<proteinExistence type="inferred from homology"/>
<dbReference type="EMBL" id="AAFI02000100">
    <property type="protein sequence ID" value="EAL63732.1"/>
    <property type="molecule type" value="Genomic_DNA"/>
</dbReference>
<dbReference type="RefSeq" id="XP_637241.1">
    <property type="nucleotide sequence ID" value="XM_632149.1"/>
</dbReference>
<dbReference type="FunCoup" id="Q54KI2">
    <property type="interactions" value="744"/>
</dbReference>
<dbReference type="PaxDb" id="44689-DDB0187423"/>
<dbReference type="EnsemblProtists" id="EAL63732">
    <property type="protein sequence ID" value="EAL63732"/>
    <property type="gene ID" value="DDB_G0287329"/>
</dbReference>
<dbReference type="GeneID" id="8626072"/>
<dbReference type="KEGG" id="ddi:DDB_G0287329"/>
<dbReference type="dictyBase" id="DDB_G0287329"/>
<dbReference type="eggNOG" id="ENOG502RIK4">
    <property type="taxonomic scope" value="Eukaryota"/>
</dbReference>
<dbReference type="HOGENOM" id="CLU_2727542_0_0_1"/>
<dbReference type="InParanoid" id="Q54KI2"/>
<dbReference type="PRO" id="PR:Q54KI2"/>
<dbReference type="Proteomes" id="UP000002195">
    <property type="component" value="Chromosome 5"/>
</dbReference>
<dbReference type="GO" id="GO:0016020">
    <property type="term" value="C:membrane"/>
    <property type="evidence" value="ECO:0007669"/>
    <property type="project" value="UniProtKB-SubCell"/>
</dbReference>
<organism>
    <name type="scientific">Dictyostelium discoideum</name>
    <name type="common">Social amoeba</name>
    <dbReference type="NCBI Taxonomy" id="44689"/>
    <lineage>
        <taxon>Eukaryota</taxon>
        <taxon>Amoebozoa</taxon>
        <taxon>Evosea</taxon>
        <taxon>Eumycetozoa</taxon>
        <taxon>Dictyostelia</taxon>
        <taxon>Dictyosteliales</taxon>
        <taxon>Dictyosteliaceae</taxon>
        <taxon>Dictyostelium</taxon>
    </lineage>
</organism>
<keyword id="KW-0472">Membrane</keyword>
<keyword id="KW-1185">Reference proteome</keyword>
<keyword id="KW-0732">Signal</keyword>
<keyword id="KW-0812">Transmembrane</keyword>
<keyword id="KW-1133">Transmembrane helix</keyword>
<feature type="signal peptide" evidence="1">
    <location>
        <begin position="1"/>
        <end position="22"/>
    </location>
</feature>
<feature type="chain" id="PRO_0000347031" description="Putative uncharacterized transmembrane protein DDB_G0287329">
    <location>
        <begin position="23"/>
        <end position="72"/>
    </location>
</feature>
<feature type="topological domain" description="Extracellular" evidence="1">
    <location>
        <begin position="23"/>
        <end position="28"/>
    </location>
</feature>
<feature type="transmembrane region" description="Helical" evidence="1">
    <location>
        <begin position="29"/>
        <end position="49"/>
    </location>
</feature>
<feature type="topological domain" description="Cytoplasmic" evidence="1">
    <location>
        <begin position="50"/>
        <end position="72"/>
    </location>
</feature>
<evidence type="ECO:0000255" key="1"/>
<evidence type="ECO:0000305" key="2"/>
<protein>
    <recommendedName>
        <fullName>Putative uncharacterized transmembrane protein DDB_G0287329</fullName>
    </recommendedName>
</protein>
<comment type="subcellular location">
    <subcellularLocation>
        <location evidence="2">Membrane</location>
        <topology evidence="2">Single-pass membrane protein</topology>
    </subcellularLocation>
</comment>
<name>Y7423_DICDI</name>
<accession>Q54KI2</accession>
<gene>
    <name type="ORF">DDB_G0287329</name>
</gene>